<feature type="chain" id="PRO_0000179726" description="ATP-dependent Clp protease proteolytic subunit">
    <location>
        <begin position="1"/>
        <end position="207"/>
    </location>
</feature>
<feature type="active site" description="Nucleophile" evidence="1">
    <location>
        <position position="111"/>
    </location>
</feature>
<feature type="active site" evidence="1">
    <location>
        <position position="136"/>
    </location>
</feature>
<accession>Q66DT4</accession>
<organism>
    <name type="scientific">Yersinia pseudotuberculosis serotype I (strain IP32953)</name>
    <dbReference type="NCBI Taxonomy" id="273123"/>
    <lineage>
        <taxon>Bacteria</taxon>
        <taxon>Pseudomonadati</taxon>
        <taxon>Pseudomonadota</taxon>
        <taxon>Gammaproteobacteria</taxon>
        <taxon>Enterobacterales</taxon>
        <taxon>Yersiniaceae</taxon>
        <taxon>Yersinia</taxon>
    </lineage>
</organism>
<reference key="1">
    <citation type="journal article" date="2004" name="Proc. Natl. Acad. Sci. U.S.A.">
        <title>Insights into the evolution of Yersinia pestis through whole-genome comparison with Yersinia pseudotuberculosis.</title>
        <authorList>
            <person name="Chain P.S.G."/>
            <person name="Carniel E."/>
            <person name="Larimer F.W."/>
            <person name="Lamerdin J."/>
            <person name="Stoutland P.O."/>
            <person name="Regala W.M."/>
            <person name="Georgescu A.M."/>
            <person name="Vergez L.M."/>
            <person name="Land M.L."/>
            <person name="Motin V.L."/>
            <person name="Brubaker R.R."/>
            <person name="Fowler J."/>
            <person name="Hinnebusch J."/>
            <person name="Marceau M."/>
            <person name="Medigue C."/>
            <person name="Simonet M."/>
            <person name="Chenal-Francisque V."/>
            <person name="Souza B."/>
            <person name="Dacheux D."/>
            <person name="Elliott J.M."/>
            <person name="Derbise A."/>
            <person name="Hauser L.J."/>
            <person name="Garcia E."/>
        </authorList>
    </citation>
    <scope>NUCLEOTIDE SEQUENCE [LARGE SCALE GENOMIC DNA]</scope>
    <source>
        <strain>IP32953</strain>
    </source>
</reference>
<proteinExistence type="inferred from homology"/>
<sequence>MSYSGERDQFAPNMALVPMVVEQTSRGERSYDIFSRLLKERIIFLTGQVEDHMANLITAQMLFLEAENPEKDIFLYINSPGGVITAGMSIYDTMQFIKPDVSTICMGQACSMGAFLLTAGAKGKRFCLPNSRVMIHQPLGGFQGQATDIEIHAKEILKVKSRMNELMAYHTGKSLEEIERDTERDRFLSAEQSVEYGLVDSVFTRRD</sequence>
<name>CLPP_YERPS</name>
<evidence type="ECO:0000255" key="1">
    <source>
        <dbReference type="HAMAP-Rule" id="MF_00444"/>
    </source>
</evidence>
<protein>
    <recommendedName>
        <fullName evidence="1">ATP-dependent Clp protease proteolytic subunit</fullName>
        <ecNumber evidence="1">3.4.21.92</ecNumber>
    </recommendedName>
    <alternativeName>
        <fullName evidence="1">Endopeptidase Clp</fullName>
    </alternativeName>
</protein>
<comment type="function">
    <text evidence="1">Cleaves peptides in various proteins in a process that requires ATP hydrolysis. Has a chymotrypsin-like activity. Plays a major role in the degradation of misfolded proteins.</text>
</comment>
<comment type="catalytic activity">
    <reaction evidence="1">
        <text>Hydrolysis of proteins to small peptides in the presence of ATP and magnesium. alpha-casein is the usual test substrate. In the absence of ATP, only oligopeptides shorter than five residues are hydrolyzed (such as succinyl-Leu-Tyr-|-NHMec, and Leu-Tyr-Leu-|-Tyr-Trp, in which cleavage of the -Tyr-|-Leu- and -Tyr-|-Trp bonds also occurs).</text>
        <dbReference type="EC" id="3.4.21.92"/>
    </reaction>
</comment>
<comment type="subunit">
    <text evidence="1">Fourteen ClpP subunits assemble into 2 heptameric rings which stack back to back to give a disk-like structure with a central cavity, resembling the structure of eukaryotic proteasomes.</text>
</comment>
<comment type="subcellular location">
    <subcellularLocation>
        <location evidence="1">Cytoplasm</location>
    </subcellularLocation>
</comment>
<comment type="similarity">
    <text evidence="1">Belongs to the peptidase S14 family.</text>
</comment>
<gene>
    <name evidence="1" type="primary">clpP</name>
    <name type="ordered locus">YPTB0959</name>
</gene>
<dbReference type="EC" id="3.4.21.92" evidence="1"/>
<dbReference type="EMBL" id="BX936398">
    <property type="protein sequence ID" value="CAH20199.1"/>
    <property type="molecule type" value="Genomic_DNA"/>
</dbReference>
<dbReference type="RefSeq" id="WP_002208642.1">
    <property type="nucleotide sequence ID" value="NZ_CP009712.1"/>
</dbReference>
<dbReference type="SMR" id="Q66DT4"/>
<dbReference type="MEROPS" id="S14.001"/>
<dbReference type="GeneID" id="96664465"/>
<dbReference type="KEGG" id="ypo:BZ17_1588"/>
<dbReference type="KEGG" id="yps:YPTB0959"/>
<dbReference type="PATRIC" id="fig|273123.14.peg.1685"/>
<dbReference type="Proteomes" id="UP000001011">
    <property type="component" value="Chromosome"/>
</dbReference>
<dbReference type="GO" id="GO:0005737">
    <property type="term" value="C:cytoplasm"/>
    <property type="evidence" value="ECO:0007669"/>
    <property type="project" value="UniProtKB-SubCell"/>
</dbReference>
<dbReference type="GO" id="GO:0009368">
    <property type="term" value="C:endopeptidase Clp complex"/>
    <property type="evidence" value="ECO:0007669"/>
    <property type="project" value="TreeGrafter"/>
</dbReference>
<dbReference type="GO" id="GO:0004176">
    <property type="term" value="F:ATP-dependent peptidase activity"/>
    <property type="evidence" value="ECO:0007669"/>
    <property type="project" value="InterPro"/>
</dbReference>
<dbReference type="GO" id="GO:0051117">
    <property type="term" value="F:ATPase binding"/>
    <property type="evidence" value="ECO:0007669"/>
    <property type="project" value="TreeGrafter"/>
</dbReference>
<dbReference type="GO" id="GO:0004252">
    <property type="term" value="F:serine-type endopeptidase activity"/>
    <property type="evidence" value="ECO:0007669"/>
    <property type="project" value="UniProtKB-UniRule"/>
</dbReference>
<dbReference type="GO" id="GO:0006515">
    <property type="term" value="P:protein quality control for misfolded or incompletely synthesized proteins"/>
    <property type="evidence" value="ECO:0007669"/>
    <property type="project" value="TreeGrafter"/>
</dbReference>
<dbReference type="CDD" id="cd07017">
    <property type="entry name" value="S14_ClpP_2"/>
    <property type="match status" value="1"/>
</dbReference>
<dbReference type="FunFam" id="3.90.226.10:FF:000001">
    <property type="entry name" value="ATP-dependent Clp protease proteolytic subunit"/>
    <property type="match status" value="1"/>
</dbReference>
<dbReference type="Gene3D" id="3.90.226.10">
    <property type="entry name" value="2-enoyl-CoA Hydratase, Chain A, domain 1"/>
    <property type="match status" value="1"/>
</dbReference>
<dbReference type="HAMAP" id="MF_00444">
    <property type="entry name" value="ClpP"/>
    <property type="match status" value="1"/>
</dbReference>
<dbReference type="InterPro" id="IPR001907">
    <property type="entry name" value="ClpP"/>
</dbReference>
<dbReference type="InterPro" id="IPR029045">
    <property type="entry name" value="ClpP/crotonase-like_dom_sf"/>
</dbReference>
<dbReference type="InterPro" id="IPR023562">
    <property type="entry name" value="ClpP/TepA"/>
</dbReference>
<dbReference type="InterPro" id="IPR033135">
    <property type="entry name" value="ClpP_His_AS"/>
</dbReference>
<dbReference type="InterPro" id="IPR018215">
    <property type="entry name" value="ClpP_Ser_AS"/>
</dbReference>
<dbReference type="NCBIfam" id="TIGR00493">
    <property type="entry name" value="clpP"/>
    <property type="match status" value="1"/>
</dbReference>
<dbReference type="NCBIfam" id="NF001368">
    <property type="entry name" value="PRK00277.1"/>
    <property type="match status" value="1"/>
</dbReference>
<dbReference type="NCBIfam" id="NF009205">
    <property type="entry name" value="PRK12553.1"/>
    <property type="match status" value="1"/>
</dbReference>
<dbReference type="PANTHER" id="PTHR10381">
    <property type="entry name" value="ATP-DEPENDENT CLP PROTEASE PROTEOLYTIC SUBUNIT"/>
    <property type="match status" value="1"/>
</dbReference>
<dbReference type="PANTHER" id="PTHR10381:SF70">
    <property type="entry name" value="ATP-DEPENDENT CLP PROTEASE PROTEOLYTIC SUBUNIT"/>
    <property type="match status" value="1"/>
</dbReference>
<dbReference type="Pfam" id="PF00574">
    <property type="entry name" value="CLP_protease"/>
    <property type="match status" value="1"/>
</dbReference>
<dbReference type="PRINTS" id="PR00127">
    <property type="entry name" value="CLPPROTEASEP"/>
</dbReference>
<dbReference type="SUPFAM" id="SSF52096">
    <property type="entry name" value="ClpP/crotonase"/>
    <property type="match status" value="1"/>
</dbReference>
<dbReference type="PROSITE" id="PS00382">
    <property type="entry name" value="CLP_PROTEASE_HIS"/>
    <property type="match status" value="1"/>
</dbReference>
<dbReference type="PROSITE" id="PS00381">
    <property type="entry name" value="CLP_PROTEASE_SER"/>
    <property type="match status" value="1"/>
</dbReference>
<keyword id="KW-0963">Cytoplasm</keyword>
<keyword id="KW-0378">Hydrolase</keyword>
<keyword id="KW-0645">Protease</keyword>
<keyword id="KW-0720">Serine protease</keyword>